<organism>
    <name type="scientific">Escherichia coli O157:H7</name>
    <dbReference type="NCBI Taxonomy" id="83334"/>
    <lineage>
        <taxon>Bacteria</taxon>
        <taxon>Pseudomonadati</taxon>
        <taxon>Pseudomonadota</taxon>
        <taxon>Gammaproteobacteria</taxon>
        <taxon>Enterobacterales</taxon>
        <taxon>Enterobacteriaceae</taxon>
        <taxon>Escherichia</taxon>
    </lineage>
</organism>
<evidence type="ECO:0000250" key="1"/>
<evidence type="ECO:0000255" key="2"/>
<evidence type="ECO:0000305" key="3"/>
<dbReference type="EMBL" id="AE005174">
    <property type="protein sequence ID" value="AAG56499.1"/>
    <property type="molecule type" value="Genomic_DNA"/>
</dbReference>
<dbReference type="EMBL" id="BA000007">
    <property type="protein sequence ID" value="BAB35305.1"/>
    <property type="molecule type" value="Genomic_DNA"/>
</dbReference>
<dbReference type="PIR" id="B90864">
    <property type="entry name" value="B90864"/>
</dbReference>
<dbReference type="PIR" id="G85754">
    <property type="entry name" value="G85754"/>
</dbReference>
<dbReference type="RefSeq" id="NP_309909.1">
    <property type="nucleotide sequence ID" value="NC_002695.1"/>
</dbReference>
<dbReference type="RefSeq" id="WP_001274963.1">
    <property type="nucleotide sequence ID" value="NZ_VOAI01000015.1"/>
</dbReference>
<dbReference type="SMR" id="P0AFN1"/>
<dbReference type="STRING" id="155864.Z2480"/>
<dbReference type="GeneID" id="75203420"/>
<dbReference type="GeneID" id="912683"/>
<dbReference type="KEGG" id="ece:Z2480"/>
<dbReference type="KEGG" id="ecs:ECs_1882"/>
<dbReference type="PATRIC" id="fig|386585.9.peg.1986"/>
<dbReference type="eggNOG" id="ENOG5032YI2">
    <property type="taxonomic scope" value="Bacteria"/>
</dbReference>
<dbReference type="HOGENOM" id="CLU_178570_0_0_6"/>
<dbReference type="OMA" id="LWLHYSQ"/>
<dbReference type="Proteomes" id="UP000000558">
    <property type="component" value="Chromosome"/>
</dbReference>
<dbReference type="Proteomes" id="UP000002519">
    <property type="component" value="Chromosome"/>
</dbReference>
<dbReference type="GO" id="GO:0005886">
    <property type="term" value="C:plasma membrane"/>
    <property type="evidence" value="ECO:0007669"/>
    <property type="project" value="UniProtKB-SubCell"/>
</dbReference>
<dbReference type="GO" id="GO:0009271">
    <property type="term" value="P:phage shock"/>
    <property type="evidence" value="ECO:0007669"/>
    <property type="project" value="InterPro"/>
</dbReference>
<dbReference type="GO" id="GO:0006355">
    <property type="term" value="P:regulation of DNA-templated transcription"/>
    <property type="evidence" value="ECO:0007669"/>
    <property type="project" value="InterPro"/>
</dbReference>
<dbReference type="InterPro" id="IPR009554">
    <property type="entry name" value="Phageshock_PspB"/>
</dbReference>
<dbReference type="NCBIfam" id="TIGR02976">
    <property type="entry name" value="phageshock_pspB"/>
    <property type="match status" value="1"/>
</dbReference>
<dbReference type="NCBIfam" id="NF006993">
    <property type="entry name" value="PRK09458.1"/>
    <property type="match status" value="1"/>
</dbReference>
<dbReference type="Pfam" id="PF06667">
    <property type="entry name" value="PspB"/>
    <property type="match status" value="1"/>
</dbReference>
<comment type="function">
    <text evidence="1">The phage shock protein (psp) operon (pspABCDE) may play a significant role in the competition for survival under nutrient- or energy-limited conditions. PspB is involved in transcription regulation (By similarity).</text>
</comment>
<comment type="subcellular location">
    <subcellularLocation>
        <location evidence="1">Cell inner membrane</location>
        <topology evidence="1">Single-pass membrane protein</topology>
    </subcellularLocation>
</comment>
<comment type="similarity">
    <text evidence="3">Belongs to the PspB family.</text>
</comment>
<gene>
    <name type="primary">pspB</name>
    <name type="ordered locus">Z2480</name>
    <name type="ordered locus">ECs1882</name>
</gene>
<accession>P0AFN1</accession>
<accession>P23854</accession>
<reference key="1">
    <citation type="journal article" date="2001" name="Nature">
        <title>Genome sequence of enterohaemorrhagic Escherichia coli O157:H7.</title>
        <authorList>
            <person name="Perna N.T."/>
            <person name="Plunkett G. III"/>
            <person name="Burland V."/>
            <person name="Mau B."/>
            <person name="Glasner J.D."/>
            <person name="Rose D.J."/>
            <person name="Mayhew G.F."/>
            <person name="Evans P.S."/>
            <person name="Gregor J."/>
            <person name="Kirkpatrick H.A."/>
            <person name="Posfai G."/>
            <person name="Hackett J."/>
            <person name="Klink S."/>
            <person name="Boutin A."/>
            <person name="Shao Y."/>
            <person name="Miller L."/>
            <person name="Grotbeck E.J."/>
            <person name="Davis N.W."/>
            <person name="Lim A."/>
            <person name="Dimalanta E.T."/>
            <person name="Potamousis K."/>
            <person name="Apodaca J."/>
            <person name="Anantharaman T.S."/>
            <person name="Lin J."/>
            <person name="Yen G."/>
            <person name="Schwartz D.C."/>
            <person name="Welch R.A."/>
            <person name="Blattner F.R."/>
        </authorList>
    </citation>
    <scope>NUCLEOTIDE SEQUENCE [LARGE SCALE GENOMIC DNA]</scope>
    <source>
        <strain>O157:H7 / EDL933 / ATCC 700927 / EHEC</strain>
    </source>
</reference>
<reference key="2">
    <citation type="journal article" date="2001" name="DNA Res.">
        <title>Complete genome sequence of enterohemorrhagic Escherichia coli O157:H7 and genomic comparison with a laboratory strain K-12.</title>
        <authorList>
            <person name="Hayashi T."/>
            <person name="Makino K."/>
            <person name="Ohnishi M."/>
            <person name="Kurokawa K."/>
            <person name="Ishii K."/>
            <person name="Yokoyama K."/>
            <person name="Han C.-G."/>
            <person name="Ohtsubo E."/>
            <person name="Nakayama K."/>
            <person name="Murata T."/>
            <person name="Tanaka M."/>
            <person name="Tobe T."/>
            <person name="Iida T."/>
            <person name="Takami H."/>
            <person name="Honda T."/>
            <person name="Sasakawa C."/>
            <person name="Ogasawara N."/>
            <person name="Yasunaga T."/>
            <person name="Kuhara S."/>
            <person name="Shiba T."/>
            <person name="Hattori M."/>
            <person name="Shinagawa H."/>
        </authorList>
    </citation>
    <scope>NUCLEOTIDE SEQUENCE [LARGE SCALE GENOMIC DNA]</scope>
    <source>
        <strain>O157:H7 / Sakai / RIMD 0509952 / EHEC</strain>
    </source>
</reference>
<feature type="chain" id="PRO_0000097073" description="Phage shock protein B">
    <location>
        <begin position="1"/>
        <end position="74"/>
    </location>
</feature>
<feature type="transmembrane region" description="Helical" evidence="2">
    <location>
        <begin position="4"/>
        <end position="24"/>
    </location>
</feature>
<feature type="coiled-coil region" evidence="2">
    <location>
        <begin position="33"/>
        <end position="68"/>
    </location>
</feature>
<proteinExistence type="inferred from homology"/>
<name>PSPB_ECO57</name>
<protein>
    <recommendedName>
        <fullName>Phage shock protein B</fullName>
    </recommendedName>
</protein>
<sequence length="74" mass="8763">MSALFLAIPLTIFVLFVLPIWLWLHYSNRSGRSELSQSEQQRLAQLADEAKRMRERIQALESILDAEHPNWRDR</sequence>
<keyword id="KW-0997">Cell inner membrane</keyword>
<keyword id="KW-1003">Cell membrane</keyword>
<keyword id="KW-0175">Coiled coil</keyword>
<keyword id="KW-0472">Membrane</keyword>
<keyword id="KW-1185">Reference proteome</keyword>
<keyword id="KW-0812">Transmembrane</keyword>
<keyword id="KW-1133">Transmembrane helix</keyword>